<protein>
    <recommendedName>
        <fullName evidence="1">Phenylalanine--tRNA ligase alpha subunit</fullName>
        <ecNumber evidence="1">6.1.1.20</ecNumber>
    </recommendedName>
    <alternativeName>
        <fullName evidence="1">Phenylalanyl-tRNA synthetase alpha subunit</fullName>
        <shortName evidence="1">PheRS</shortName>
    </alternativeName>
</protein>
<keyword id="KW-0030">Aminoacyl-tRNA synthetase</keyword>
<keyword id="KW-0067">ATP-binding</keyword>
<keyword id="KW-0963">Cytoplasm</keyword>
<keyword id="KW-0436">Ligase</keyword>
<keyword id="KW-0460">Magnesium</keyword>
<keyword id="KW-0479">Metal-binding</keyword>
<keyword id="KW-0547">Nucleotide-binding</keyword>
<keyword id="KW-0648">Protein biosynthesis</keyword>
<keyword id="KW-1185">Reference proteome</keyword>
<evidence type="ECO:0000255" key="1">
    <source>
        <dbReference type="HAMAP-Rule" id="MF_00281"/>
    </source>
</evidence>
<gene>
    <name evidence="1" type="primary">pheS</name>
    <name type="ordered locus">SbBS512_E1956</name>
</gene>
<proteinExistence type="inferred from homology"/>
<dbReference type="EC" id="6.1.1.20" evidence="1"/>
<dbReference type="EMBL" id="CP001063">
    <property type="protein sequence ID" value="ACD06418.1"/>
    <property type="molecule type" value="Genomic_DNA"/>
</dbReference>
<dbReference type="RefSeq" id="WP_000018595.1">
    <property type="nucleotide sequence ID" value="NC_010658.1"/>
</dbReference>
<dbReference type="SMR" id="B2U392"/>
<dbReference type="STRING" id="344609.SbBS512_E1956"/>
<dbReference type="KEGG" id="sbc:SbBS512_E1956"/>
<dbReference type="HOGENOM" id="CLU_025086_0_1_6"/>
<dbReference type="Proteomes" id="UP000001030">
    <property type="component" value="Chromosome"/>
</dbReference>
<dbReference type="GO" id="GO:0005737">
    <property type="term" value="C:cytoplasm"/>
    <property type="evidence" value="ECO:0007669"/>
    <property type="project" value="UniProtKB-SubCell"/>
</dbReference>
<dbReference type="GO" id="GO:0005524">
    <property type="term" value="F:ATP binding"/>
    <property type="evidence" value="ECO:0007669"/>
    <property type="project" value="UniProtKB-UniRule"/>
</dbReference>
<dbReference type="GO" id="GO:0000287">
    <property type="term" value="F:magnesium ion binding"/>
    <property type="evidence" value="ECO:0007669"/>
    <property type="project" value="UniProtKB-UniRule"/>
</dbReference>
<dbReference type="GO" id="GO:0004826">
    <property type="term" value="F:phenylalanine-tRNA ligase activity"/>
    <property type="evidence" value="ECO:0007669"/>
    <property type="project" value="UniProtKB-UniRule"/>
</dbReference>
<dbReference type="GO" id="GO:0000049">
    <property type="term" value="F:tRNA binding"/>
    <property type="evidence" value="ECO:0007669"/>
    <property type="project" value="InterPro"/>
</dbReference>
<dbReference type="GO" id="GO:0006432">
    <property type="term" value="P:phenylalanyl-tRNA aminoacylation"/>
    <property type="evidence" value="ECO:0007669"/>
    <property type="project" value="UniProtKB-UniRule"/>
</dbReference>
<dbReference type="CDD" id="cd00496">
    <property type="entry name" value="PheRS_alpha_core"/>
    <property type="match status" value="1"/>
</dbReference>
<dbReference type="FunFam" id="3.30.930.10:FF:000003">
    <property type="entry name" value="Phenylalanine--tRNA ligase alpha subunit"/>
    <property type="match status" value="1"/>
</dbReference>
<dbReference type="Gene3D" id="3.30.930.10">
    <property type="entry name" value="Bira Bifunctional Protein, Domain 2"/>
    <property type="match status" value="1"/>
</dbReference>
<dbReference type="HAMAP" id="MF_00281">
    <property type="entry name" value="Phe_tRNA_synth_alpha1"/>
    <property type="match status" value="1"/>
</dbReference>
<dbReference type="InterPro" id="IPR006195">
    <property type="entry name" value="aa-tRNA-synth_II"/>
</dbReference>
<dbReference type="InterPro" id="IPR045864">
    <property type="entry name" value="aa-tRNA-synth_II/BPL/LPL"/>
</dbReference>
<dbReference type="InterPro" id="IPR004529">
    <property type="entry name" value="Phe-tRNA-synth_IIc_asu"/>
</dbReference>
<dbReference type="InterPro" id="IPR004188">
    <property type="entry name" value="Phe-tRNA_ligase_II_N"/>
</dbReference>
<dbReference type="InterPro" id="IPR022911">
    <property type="entry name" value="Phe_tRNA_ligase_alpha1_bac"/>
</dbReference>
<dbReference type="InterPro" id="IPR002319">
    <property type="entry name" value="Phenylalanyl-tRNA_Synthase"/>
</dbReference>
<dbReference type="InterPro" id="IPR010978">
    <property type="entry name" value="tRNA-bd_arm"/>
</dbReference>
<dbReference type="NCBIfam" id="TIGR00468">
    <property type="entry name" value="pheS"/>
    <property type="match status" value="1"/>
</dbReference>
<dbReference type="PANTHER" id="PTHR11538:SF41">
    <property type="entry name" value="PHENYLALANINE--TRNA LIGASE, MITOCHONDRIAL"/>
    <property type="match status" value="1"/>
</dbReference>
<dbReference type="PANTHER" id="PTHR11538">
    <property type="entry name" value="PHENYLALANYL-TRNA SYNTHETASE"/>
    <property type="match status" value="1"/>
</dbReference>
<dbReference type="Pfam" id="PF02912">
    <property type="entry name" value="Phe_tRNA-synt_N"/>
    <property type="match status" value="1"/>
</dbReference>
<dbReference type="Pfam" id="PF01409">
    <property type="entry name" value="tRNA-synt_2d"/>
    <property type="match status" value="1"/>
</dbReference>
<dbReference type="SUPFAM" id="SSF55681">
    <property type="entry name" value="Class II aaRS and biotin synthetases"/>
    <property type="match status" value="1"/>
</dbReference>
<dbReference type="SUPFAM" id="SSF46589">
    <property type="entry name" value="tRNA-binding arm"/>
    <property type="match status" value="1"/>
</dbReference>
<dbReference type="PROSITE" id="PS50862">
    <property type="entry name" value="AA_TRNA_LIGASE_II"/>
    <property type="match status" value="1"/>
</dbReference>
<accession>B2U392</accession>
<feature type="chain" id="PRO_1000114917" description="Phenylalanine--tRNA ligase alpha subunit">
    <location>
        <begin position="1"/>
        <end position="327"/>
    </location>
</feature>
<feature type="binding site" evidence="1">
    <location>
        <position position="252"/>
    </location>
    <ligand>
        <name>Mg(2+)</name>
        <dbReference type="ChEBI" id="CHEBI:18420"/>
        <note>shared with beta subunit</note>
    </ligand>
</feature>
<reference key="1">
    <citation type="submission" date="2008-05" db="EMBL/GenBank/DDBJ databases">
        <title>Complete sequence of Shigella boydii serotype 18 strain BS512.</title>
        <authorList>
            <person name="Rasko D.A."/>
            <person name="Rosovitz M."/>
            <person name="Maurelli A.T."/>
            <person name="Myers G."/>
            <person name="Seshadri R."/>
            <person name="Cer R."/>
            <person name="Jiang L."/>
            <person name="Ravel J."/>
            <person name="Sebastian Y."/>
        </authorList>
    </citation>
    <scope>NUCLEOTIDE SEQUENCE [LARGE SCALE GENOMIC DNA]</scope>
    <source>
        <strain>CDC 3083-94 / BS512</strain>
    </source>
</reference>
<sequence>MSHLAELVASAKAAISQASDVAALDNVRVEYLGKKGHLTLQMTTLRELPPEERPAAGAVINEAKEQVQQALNARKAELESAALNARLAAETIDVSLPGRRIENGGLHPVTRTIDRIESFFGELGFTVATGPEIEDDYHNFDALNIPGHHPARADHDTFWFDTTRLLRTQTSGVQIRTMKAQQPPIRIIAPGRVYRNDYDQTHTPMFHQMEGLIVDTNISFTNLKGTLHDFLRNFFEEDLQIRFRPSYFPFTEPSAEVDVMGKNGKWLEVLGCGMVHPNVLRNVGIDPEVYSGFAFGMGMERLTMLRYGVTDLRLFFENDLRFLKQFK</sequence>
<comment type="catalytic activity">
    <reaction evidence="1">
        <text>tRNA(Phe) + L-phenylalanine + ATP = L-phenylalanyl-tRNA(Phe) + AMP + diphosphate + H(+)</text>
        <dbReference type="Rhea" id="RHEA:19413"/>
        <dbReference type="Rhea" id="RHEA-COMP:9668"/>
        <dbReference type="Rhea" id="RHEA-COMP:9699"/>
        <dbReference type="ChEBI" id="CHEBI:15378"/>
        <dbReference type="ChEBI" id="CHEBI:30616"/>
        <dbReference type="ChEBI" id="CHEBI:33019"/>
        <dbReference type="ChEBI" id="CHEBI:58095"/>
        <dbReference type="ChEBI" id="CHEBI:78442"/>
        <dbReference type="ChEBI" id="CHEBI:78531"/>
        <dbReference type="ChEBI" id="CHEBI:456215"/>
        <dbReference type="EC" id="6.1.1.20"/>
    </reaction>
</comment>
<comment type="cofactor">
    <cofactor evidence="1">
        <name>Mg(2+)</name>
        <dbReference type="ChEBI" id="CHEBI:18420"/>
    </cofactor>
    <text evidence="1">Binds 2 magnesium ions per tetramer.</text>
</comment>
<comment type="subunit">
    <text evidence="1">Tetramer of two alpha and two beta subunits.</text>
</comment>
<comment type="subcellular location">
    <subcellularLocation>
        <location evidence="1">Cytoplasm</location>
    </subcellularLocation>
</comment>
<comment type="similarity">
    <text evidence="1">Belongs to the class-II aminoacyl-tRNA synthetase family. Phe-tRNA synthetase alpha subunit type 1 subfamily.</text>
</comment>
<organism>
    <name type="scientific">Shigella boydii serotype 18 (strain CDC 3083-94 / BS512)</name>
    <dbReference type="NCBI Taxonomy" id="344609"/>
    <lineage>
        <taxon>Bacteria</taxon>
        <taxon>Pseudomonadati</taxon>
        <taxon>Pseudomonadota</taxon>
        <taxon>Gammaproteobacteria</taxon>
        <taxon>Enterobacterales</taxon>
        <taxon>Enterobacteriaceae</taxon>
        <taxon>Shigella</taxon>
    </lineage>
</organism>
<name>SYFA_SHIB3</name>